<organism>
    <name type="scientific">Hyperthermus butylicus (strain DSM 5456 / JCM 9403 / PLM1-5)</name>
    <dbReference type="NCBI Taxonomy" id="415426"/>
    <lineage>
        <taxon>Archaea</taxon>
        <taxon>Thermoproteota</taxon>
        <taxon>Thermoprotei</taxon>
        <taxon>Desulfurococcales</taxon>
        <taxon>Pyrodictiaceae</taxon>
        <taxon>Hyperthermus</taxon>
    </lineage>
</organism>
<comment type="catalytic activity">
    <reaction evidence="1">
        <text>tRNA(Trp) + L-tryptophan + ATP = L-tryptophyl-tRNA(Trp) + AMP + diphosphate + H(+)</text>
        <dbReference type="Rhea" id="RHEA:24080"/>
        <dbReference type="Rhea" id="RHEA-COMP:9671"/>
        <dbReference type="Rhea" id="RHEA-COMP:9705"/>
        <dbReference type="ChEBI" id="CHEBI:15378"/>
        <dbReference type="ChEBI" id="CHEBI:30616"/>
        <dbReference type="ChEBI" id="CHEBI:33019"/>
        <dbReference type="ChEBI" id="CHEBI:57912"/>
        <dbReference type="ChEBI" id="CHEBI:78442"/>
        <dbReference type="ChEBI" id="CHEBI:78535"/>
        <dbReference type="ChEBI" id="CHEBI:456215"/>
        <dbReference type="EC" id="6.1.1.2"/>
    </reaction>
</comment>
<comment type="subcellular location">
    <subcellularLocation>
        <location evidence="1">Cytoplasm</location>
    </subcellularLocation>
</comment>
<comment type="similarity">
    <text evidence="1">Belongs to the class-I aminoacyl-tRNA synthetase family.</text>
</comment>
<dbReference type="EC" id="6.1.1.2" evidence="1"/>
<dbReference type="EMBL" id="CP000493">
    <property type="protein sequence ID" value="ABM80795.1"/>
    <property type="molecule type" value="Genomic_DNA"/>
</dbReference>
<dbReference type="RefSeq" id="WP_011822113.1">
    <property type="nucleotide sequence ID" value="NC_008818.1"/>
</dbReference>
<dbReference type="SMR" id="A2BLD4"/>
<dbReference type="STRING" id="415426.Hbut_0947"/>
<dbReference type="EnsemblBacteria" id="ABM80795">
    <property type="protein sequence ID" value="ABM80795"/>
    <property type="gene ID" value="Hbut_0947"/>
</dbReference>
<dbReference type="GeneID" id="4782824"/>
<dbReference type="KEGG" id="hbu:Hbut_0947"/>
<dbReference type="eggNOG" id="arCOG01887">
    <property type="taxonomic scope" value="Archaea"/>
</dbReference>
<dbReference type="HOGENOM" id="CLU_032621_3_0_2"/>
<dbReference type="OrthoDB" id="371821at2157"/>
<dbReference type="Proteomes" id="UP000002593">
    <property type="component" value="Chromosome"/>
</dbReference>
<dbReference type="GO" id="GO:0005737">
    <property type="term" value="C:cytoplasm"/>
    <property type="evidence" value="ECO:0007669"/>
    <property type="project" value="UniProtKB-SubCell"/>
</dbReference>
<dbReference type="GO" id="GO:0005524">
    <property type="term" value="F:ATP binding"/>
    <property type="evidence" value="ECO:0007669"/>
    <property type="project" value="UniProtKB-UniRule"/>
</dbReference>
<dbReference type="GO" id="GO:0004830">
    <property type="term" value="F:tryptophan-tRNA ligase activity"/>
    <property type="evidence" value="ECO:0007669"/>
    <property type="project" value="UniProtKB-UniRule"/>
</dbReference>
<dbReference type="GO" id="GO:0006436">
    <property type="term" value="P:tryptophanyl-tRNA aminoacylation"/>
    <property type="evidence" value="ECO:0007669"/>
    <property type="project" value="UniProtKB-UniRule"/>
</dbReference>
<dbReference type="FunFam" id="3.40.50.620:FF:000207">
    <property type="entry name" value="Tryptophan--tRNA ligase"/>
    <property type="match status" value="1"/>
</dbReference>
<dbReference type="Gene3D" id="3.40.50.620">
    <property type="entry name" value="HUPs"/>
    <property type="match status" value="1"/>
</dbReference>
<dbReference type="Gene3D" id="1.10.240.10">
    <property type="entry name" value="Tyrosyl-Transfer RNA Synthetase"/>
    <property type="match status" value="1"/>
</dbReference>
<dbReference type="HAMAP" id="MF_00140_A">
    <property type="entry name" value="Trp_tRNA_synth_A"/>
    <property type="match status" value="1"/>
</dbReference>
<dbReference type="InterPro" id="IPR002305">
    <property type="entry name" value="aa-tRNA-synth_Ic"/>
</dbReference>
<dbReference type="InterPro" id="IPR014729">
    <property type="entry name" value="Rossmann-like_a/b/a_fold"/>
</dbReference>
<dbReference type="InterPro" id="IPR002306">
    <property type="entry name" value="Trp-tRNA-ligase"/>
</dbReference>
<dbReference type="InterPro" id="IPR020653">
    <property type="entry name" value="Tryptophan-tRNA-ligase_arc"/>
</dbReference>
<dbReference type="NCBIfam" id="NF008925">
    <property type="entry name" value="PRK12285.1-2"/>
    <property type="match status" value="1"/>
</dbReference>
<dbReference type="NCBIfam" id="TIGR00233">
    <property type="entry name" value="trpS"/>
    <property type="match status" value="1"/>
</dbReference>
<dbReference type="PANTHER" id="PTHR10055:SF5">
    <property type="entry name" value="TRYPTOPHAN--TRNA LIGASE"/>
    <property type="match status" value="1"/>
</dbReference>
<dbReference type="PANTHER" id="PTHR10055">
    <property type="entry name" value="TRYPTOPHANYL-TRNA SYNTHETASE"/>
    <property type="match status" value="1"/>
</dbReference>
<dbReference type="Pfam" id="PF00579">
    <property type="entry name" value="tRNA-synt_1b"/>
    <property type="match status" value="1"/>
</dbReference>
<dbReference type="PRINTS" id="PR01039">
    <property type="entry name" value="TRNASYNTHTRP"/>
</dbReference>
<dbReference type="SUPFAM" id="SSF52374">
    <property type="entry name" value="Nucleotidylyl transferase"/>
    <property type="match status" value="1"/>
</dbReference>
<sequence>MEGYRLDPWASAIRLEYEKLFRYFGIKPFQPLLPEVEKAFGKPHRLMRRGIIFGHRDYEKILEAYRSGERIALVTGFMPSGKFHFGHKMVADQIIYYQKLGFEIFVVIADAEAYAVRRLDRRKIIEIGLYEYVANLIALGLEKNKHTHIYFQTNYETPYYRLIQMFSRRVTLEEMSAIYGDLEPSKIMAALTQAADILHPQLDYFGGFKYVVVPVGADQDPHIRLTRDIAARFENELGLRRPASTYHRFQTGLDGNKMSSSRPEYTIFLTDPVDIAVRKLKRALTGGRATVEEQRRLGGEPEKCTVYEFYLYHLIEDDTQLRKIYEDCRGSRLLCGPDKEYAAELLAKFLEEHQRRLERARDRVLEYVEPPKF</sequence>
<accession>A2BLD4</accession>
<evidence type="ECO:0000255" key="1">
    <source>
        <dbReference type="HAMAP-Rule" id="MF_00140"/>
    </source>
</evidence>
<protein>
    <recommendedName>
        <fullName evidence="1">Tryptophan--tRNA ligase</fullName>
        <ecNumber evidence="1">6.1.1.2</ecNumber>
    </recommendedName>
    <alternativeName>
        <fullName evidence="1">Tryptophanyl-tRNA synthetase</fullName>
        <shortName evidence="1">TrpRS</shortName>
    </alternativeName>
</protein>
<proteinExistence type="inferred from homology"/>
<gene>
    <name evidence="1" type="primary">trpS</name>
    <name type="ordered locus">Hbut_0947</name>
</gene>
<feature type="chain" id="PRO_1000018995" description="Tryptophan--tRNA ligase">
    <location>
        <begin position="1"/>
        <end position="373"/>
    </location>
</feature>
<feature type="short sequence motif" description="'HIGH' region">
    <location>
        <begin position="79"/>
        <end position="87"/>
    </location>
</feature>
<feature type="short sequence motif" description="'KMSKS' region">
    <location>
        <begin position="257"/>
        <end position="261"/>
    </location>
</feature>
<reference key="1">
    <citation type="journal article" date="2007" name="Archaea">
        <title>The genome of Hyperthermus butylicus: a sulfur-reducing, peptide fermenting, neutrophilic Crenarchaeote growing up to 108 degrees C.</title>
        <authorList>
            <person name="Bruegger K."/>
            <person name="Chen L."/>
            <person name="Stark M."/>
            <person name="Zibat A."/>
            <person name="Redder P."/>
            <person name="Ruepp A."/>
            <person name="Awayez M."/>
            <person name="She Q."/>
            <person name="Garrett R.A."/>
            <person name="Klenk H.-P."/>
        </authorList>
    </citation>
    <scope>NUCLEOTIDE SEQUENCE [LARGE SCALE GENOMIC DNA]</scope>
    <source>
        <strain>DSM 5456 / JCM 9403 / PLM1-5</strain>
    </source>
</reference>
<name>SYW_HYPBU</name>
<keyword id="KW-0030">Aminoacyl-tRNA synthetase</keyword>
<keyword id="KW-0067">ATP-binding</keyword>
<keyword id="KW-0963">Cytoplasm</keyword>
<keyword id="KW-0436">Ligase</keyword>
<keyword id="KW-0547">Nucleotide-binding</keyword>
<keyword id="KW-0648">Protein biosynthesis</keyword>
<keyword id="KW-1185">Reference proteome</keyword>